<keyword id="KW-0028">Amino-acid biosynthesis</keyword>
<keyword id="KW-0170">Cobalt</keyword>
<keyword id="KW-0220">Diaminopimelate biosynthesis</keyword>
<keyword id="KW-0378">Hydrolase</keyword>
<keyword id="KW-0457">Lysine biosynthesis</keyword>
<keyword id="KW-0479">Metal-binding</keyword>
<keyword id="KW-0862">Zinc</keyword>
<feature type="chain" id="PRO_0000375718" description="Succinyl-diaminopimelate desuccinylase">
    <location>
        <begin position="1"/>
        <end position="375"/>
    </location>
</feature>
<feature type="active site" evidence="1">
    <location>
        <position position="68"/>
    </location>
</feature>
<feature type="active site" description="Proton acceptor" evidence="1">
    <location>
        <position position="133"/>
    </location>
</feature>
<feature type="binding site" evidence="1">
    <location>
        <position position="66"/>
    </location>
    <ligand>
        <name>Zn(2+)</name>
        <dbReference type="ChEBI" id="CHEBI:29105"/>
        <label>1</label>
    </ligand>
</feature>
<feature type="binding site" evidence="1">
    <location>
        <position position="99"/>
    </location>
    <ligand>
        <name>Zn(2+)</name>
        <dbReference type="ChEBI" id="CHEBI:29105"/>
        <label>1</label>
    </ligand>
</feature>
<feature type="binding site" evidence="1">
    <location>
        <position position="99"/>
    </location>
    <ligand>
        <name>Zn(2+)</name>
        <dbReference type="ChEBI" id="CHEBI:29105"/>
        <label>2</label>
    </ligand>
</feature>
<feature type="binding site" evidence="1">
    <location>
        <position position="134"/>
    </location>
    <ligand>
        <name>Zn(2+)</name>
        <dbReference type="ChEBI" id="CHEBI:29105"/>
        <label>2</label>
    </ligand>
</feature>
<feature type="binding site" evidence="1">
    <location>
        <position position="162"/>
    </location>
    <ligand>
        <name>Zn(2+)</name>
        <dbReference type="ChEBI" id="CHEBI:29105"/>
        <label>1</label>
    </ligand>
</feature>
<feature type="binding site" evidence="1">
    <location>
        <position position="348"/>
    </location>
    <ligand>
        <name>Zn(2+)</name>
        <dbReference type="ChEBI" id="CHEBI:29105"/>
        <label>2</label>
    </ligand>
</feature>
<evidence type="ECO:0000255" key="1">
    <source>
        <dbReference type="HAMAP-Rule" id="MF_01690"/>
    </source>
</evidence>
<comment type="function">
    <text evidence="1">Catalyzes the hydrolysis of N-succinyl-L,L-diaminopimelic acid (SDAP), forming succinate and LL-2,6-diaminopimelate (DAP), an intermediate involved in the bacterial biosynthesis of lysine and meso-diaminopimelic acid, an essential component of bacterial cell walls.</text>
</comment>
<comment type="catalytic activity">
    <reaction evidence="1">
        <text>N-succinyl-(2S,6S)-2,6-diaminopimelate + H2O = (2S,6S)-2,6-diaminopimelate + succinate</text>
        <dbReference type="Rhea" id="RHEA:22608"/>
        <dbReference type="ChEBI" id="CHEBI:15377"/>
        <dbReference type="ChEBI" id="CHEBI:30031"/>
        <dbReference type="ChEBI" id="CHEBI:57609"/>
        <dbReference type="ChEBI" id="CHEBI:58087"/>
        <dbReference type="EC" id="3.5.1.18"/>
    </reaction>
</comment>
<comment type="cofactor">
    <cofactor evidence="1">
        <name>Zn(2+)</name>
        <dbReference type="ChEBI" id="CHEBI:29105"/>
    </cofactor>
    <cofactor evidence="1">
        <name>Co(2+)</name>
        <dbReference type="ChEBI" id="CHEBI:48828"/>
    </cofactor>
    <text evidence="1">Binds 2 Zn(2+) or Co(2+) ions per subunit.</text>
</comment>
<comment type="pathway">
    <text evidence="1">Amino-acid biosynthesis; L-lysine biosynthesis via DAP pathway; LL-2,6-diaminopimelate from (S)-tetrahydrodipicolinate (succinylase route): step 3/3.</text>
</comment>
<comment type="subunit">
    <text evidence="1">Homodimer.</text>
</comment>
<comment type="similarity">
    <text evidence="1">Belongs to the peptidase M20A family. DapE subfamily.</text>
</comment>
<protein>
    <recommendedName>
        <fullName evidence="1">Succinyl-diaminopimelate desuccinylase</fullName>
        <shortName evidence="1">SDAP desuccinylase</shortName>
        <ecNumber evidence="1">3.5.1.18</ecNumber>
    </recommendedName>
    <alternativeName>
        <fullName evidence="1">N-succinyl-LL-2,6-diaminoheptanedioate amidohydrolase</fullName>
    </alternativeName>
</protein>
<reference key="1">
    <citation type="journal article" date="2004" name="Nat. Genet.">
        <title>Comparison of genome degradation in Paratyphi A and Typhi, human-restricted serovars of Salmonella enterica that cause typhoid.</title>
        <authorList>
            <person name="McClelland M."/>
            <person name="Sanderson K.E."/>
            <person name="Clifton S.W."/>
            <person name="Latreille P."/>
            <person name="Porwollik S."/>
            <person name="Sabo A."/>
            <person name="Meyer R."/>
            <person name="Bieri T."/>
            <person name="Ozersky P."/>
            <person name="McLellan M."/>
            <person name="Harkins C.R."/>
            <person name="Wang C."/>
            <person name="Nguyen C."/>
            <person name="Berghoff A."/>
            <person name="Elliott G."/>
            <person name="Kohlberg S."/>
            <person name="Strong C."/>
            <person name="Du F."/>
            <person name="Carter J."/>
            <person name="Kremizki C."/>
            <person name="Layman D."/>
            <person name="Leonard S."/>
            <person name="Sun H."/>
            <person name="Fulton L."/>
            <person name="Nash W."/>
            <person name="Miner T."/>
            <person name="Minx P."/>
            <person name="Delehaunty K."/>
            <person name="Fronick C."/>
            <person name="Magrini V."/>
            <person name="Nhan M."/>
            <person name="Warren W."/>
            <person name="Florea L."/>
            <person name="Spieth J."/>
            <person name="Wilson R.K."/>
        </authorList>
    </citation>
    <scope>NUCLEOTIDE SEQUENCE [LARGE SCALE GENOMIC DNA]</scope>
    <source>
        <strain>ATCC 9150 / SARB42</strain>
    </source>
</reference>
<proteinExistence type="inferred from homology"/>
<organism>
    <name type="scientific">Salmonella paratyphi A (strain ATCC 9150 / SARB42)</name>
    <dbReference type="NCBI Taxonomy" id="295319"/>
    <lineage>
        <taxon>Bacteria</taxon>
        <taxon>Pseudomonadati</taxon>
        <taxon>Pseudomonadota</taxon>
        <taxon>Gammaproteobacteria</taxon>
        <taxon>Enterobacterales</taxon>
        <taxon>Enterobacteriaceae</taxon>
        <taxon>Salmonella</taxon>
    </lineage>
</organism>
<accession>Q5PLR5</accession>
<name>DAPE_SALPA</name>
<gene>
    <name evidence="1" type="primary">dapE</name>
    <name type="ordered locus">SPA0386</name>
</gene>
<sequence>MSCPVIELTQQLIRRPSLSPDDAGCQALMIERLRKIGFTIEHMDFGDTQNFWAWRGRGETLAFAGHTDVVPAGDVDRWINPPFEPTIRDGMLFGRGAADMKGSLAAMVVAAERFVAQHPHHRGRLAFLITSDEEASAKNGTVKVVEALMARNERLDYCLVGEPSSTEIVGDVVKNGRRGSLTCNLTIHGVQGHVAYPHLADNPVHRAAPFLNELVAIEWDRGNDFFPATSMQVANIQAGTGSNNVIPGELFVQFNFRFSTELTDEIIKERVHALLEKHQLRYTVDWWLSGQPFLTARGKLVDAVVNAIEHYNEIKPQLLTTGGTSDGRFIARMGAQVVELGPVNATIHKINECVNAADLQLLARMYQRIMEQLVA</sequence>
<dbReference type="EC" id="3.5.1.18" evidence="1"/>
<dbReference type="EMBL" id="CP000026">
    <property type="protein sequence ID" value="AAV76398.1"/>
    <property type="molecule type" value="Genomic_DNA"/>
</dbReference>
<dbReference type="RefSeq" id="WP_001277823.1">
    <property type="nucleotide sequence ID" value="NC_006511.1"/>
</dbReference>
<dbReference type="SMR" id="Q5PLR5"/>
<dbReference type="MEROPS" id="M20.010"/>
<dbReference type="KEGG" id="spt:SPA0386"/>
<dbReference type="HOGENOM" id="CLU_021802_4_0_6"/>
<dbReference type="UniPathway" id="UPA00034">
    <property type="reaction ID" value="UER00021"/>
</dbReference>
<dbReference type="Proteomes" id="UP000008185">
    <property type="component" value="Chromosome"/>
</dbReference>
<dbReference type="GO" id="GO:0008777">
    <property type="term" value="F:acetylornithine deacetylase activity"/>
    <property type="evidence" value="ECO:0007669"/>
    <property type="project" value="TreeGrafter"/>
</dbReference>
<dbReference type="GO" id="GO:0050897">
    <property type="term" value="F:cobalt ion binding"/>
    <property type="evidence" value="ECO:0007669"/>
    <property type="project" value="UniProtKB-UniRule"/>
</dbReference>
<dbReference type="GO" id="GO:0009014">
    <property type="term" value="F:succinyl-diaminopimelate desuccinylase activity"/>
    <property type="evidence" value="ECO:0007669"/>
    <property type="project" value="UniProtKB-UniRule"/>
</dbReference>
<dbReference type="GO" id="GO:0008270">
    <property type="term" value="F:zinc ion binding"/>
    <property type="evidence" value="ECO:0007669"/>
    <property type="project" value="UniProtKB-UniRule"/>
</dbReference>
<dbReference type="GO" id="GO:0019877">
    <property type="term" value="P:diaminopimelate biosynthetic process"/>
    <property type="evidence" value="ECO:0007669"/>
    <property type="project" value="UniProtKB-UniRule"/>
</dbReference>
<dbReference type="GO" id="GO:0006526">
    <property type="term" value="P:L-arginine biosynthetic process"/>
    <property type="evidence" value="ECO:0007669"/>
    <property type="project" value="TreeGrafter"/>
</dbReference>
<dbReference type="GO" id="GO:0009089">
    <property type="term" value="P:lysine biosynthetic process via diaminopimelate"/>
    <property type="evidence" value="ECO:0007669"/>
    <property type="project" value="UniProtKB-UniRule"/>
</dbReference>
<dbReference type="CDD" id="cd03891">
    <property type="entry name" value="M20_DapE_proteobac"/>
    <property type="match status" value="1"/>
</dbReference>
<dbReference type="FunFam" id="3.30.70.360:FF:000011">
    <property type="entry name" value="Succinyl-diaminopimelate desuccinylase"/>
    <property type="match status" value="1"/>
</dbReference>
<dbReference type="FunFam" id="3.40.630.10:FF:000005">
    <property type="entry name" value="Succinyl-diaminopimelate desuccinylase"/>
    <property type="match status" value="1"/>
</dbReference>
<dbReference type="FunFam" id="3.40.630.10:FF:000010">
    <property type="entry name" value="Succinyl-diaminopimelate desuccinylase"/>
    <property type="match status" value="1"/>
</dbReference>
<dbReference type="Gene3D" id="3.40.630.10">
    <property type="entry name" value="Zn peptidases"/>
    <property type="match status" value="2"/>
</dbReference>
<dbReference type="HAMAP" id="MF_01690">
    <property type="entry name" value="DapE"/>
    <property type="match status" value="1"/>
</dbReference>
<dbReference type="InterPro" id="IPR001261">
    <property type="entry name" value="ArgE/DapE_CS"/>
</dbReference>
<dbReference type="InterPro" id="IPR036264">
    <property type="entry name" value="Bact_exopeptidase_dim_dom"/>
</dbReference>
<dbReference type="InterPro" id="IPR005941">
    <property type="entry name" value="DapE_proteobac"/>
</dbReference>
<dbReference type="InterPro" id="IPR002933">
    <property type="entry name" value="Peptidase_M20"/>
</dbReference>
<dbReference type="InterPro" id="IPR011650">
    <property type="entry name" value="Peptidase_M20_dimer"/>
</dbReference>
<dbReference type="InterPro" id="IPR050072">
    <property type="entry name" value="Peptidase_M20A"/>
</dbReference>
<dbReference type="NCBIfam" id="TIGR01246">
    <property type="entry name" value="dapE_proteo"/>
    <property type="match status" value="1"/>
</dbReference>
<dbReference type="NCBIfam" id="NF009557">
    <property type="entry name" value="PRK13009.1"/>
    <property type="match status" value="1"/>
</dbReference>
<dbReference type="PANTHER" id="PTHR43808">
    <property type="entry name" value="ACETYLORNITHINE DEACETYLASE"/>
    <property type="match status" value="1"/>
</dbReference>
<dbReference type="PANTHER" id="PTHR43808:SF31">
    <property type="entry name" value="N-ACETYL-L-CITRULLINE DEACETYLASE"/>
    <property type="match status" value="1"/>
</dbReference>
<dbReference type="Pfam" id="PF07687">
    <property type="entry name" value="M20_dimer"/>
    <property type="match status" value="1"/>
</dbReference>
<dbReference type="Pfam" id="PF01546">
    <property type="entry name" value="Peptidase_M20"/>
    <property type="match status" value="1"/>
</dbReference>
<dbReference type="SUPFAM" id="SSF55031">
    <property type="entry name" value="Bacterial exopeptidase dimerisation domain"/>
    <property type="match status" value="1"/>
</dbReference>
<dbReference type="SUPFAM" id="SSF53187">
    <property type="entry name" value="Zn-dependent exopeptidases"/>
    <property type="match status" value="1"/>
</dbReference>
<dbReference type="PROSITE" id="PS00758">
    <property type="entry name" value="ARGE_DAPE_CPG2_1"/>
    <property type="match status" value="1"/>
</dbReference>
<dbReference type="PROSITE" id="PS00759">
    <property type="entry name" value="ARGE_DAPE_CPG2_2"/>
    <property type="match status" value="1"/>
</dbReference>